<accession>B2T743</accession>
<sequence length="64" mass="7335">MKASELHQKDQAALNKELSDLLKAQFGLRMQLATQQLTNTSQLKKVRRDIARVRTVLTEKANQK</sequence>
<gene>
    <name evidence="1" type="primary">rpmC</name>
    <name type="ordered locus">Bphyt_3636</name>
</gene>
<name>RL29_PARPJ</name>
<proteinExistence type="inferred from homology"/>
<keyword id="KW-0687">Ribonucleoprotein</keyword>
<keyword id="KW-0689">Ribosomal protein</keyword>
<dbReference type="EMBL" id="CP001052">
    <property type="protein sequence ID" value="ACD18026.1"/>
    <property type="molecule type" value="Genomic_DNA"/>
</dbReference>
<dbReference type="RefSeq" id="WP_007180130.1">
    <property type="nucleotide sequence ID" value="NC_010681.1"/>
</dbReference>
<dbReference type="SMR" id="B2T743"/>
<dbReference type="STRING" id="398527.Bphyt_3636"/>
<dbReference type="GeneID" id="97311000"/>
<dbReference type="KEGG" id="bpy:Bphyt_3636"/>
<dbReference type="eggNOG" id="COG0255">
    <property type="taxonomic scope" value="Bacteria"/>
</dbReference>
<dbReference type="HOGENOM" id="CLU_158491_1_1_4"/>
<dbReference type="OrthoDB" id="9815192at2"/>
<dbReference type="Proteomes" id="UP000001739">
    <property type="component" value="Chromosome 1"/>
</dbReference>
<dbReference type="GO" id="GO:0022625">
    <property type="term" value="C:cytosolic large ribosomal subunit"/>
    <property type="evidence" value="ECO:0007669"/>
    <property type="project" value="TreeGrafter"/>
</dbReference>
<dbReference type="GO" id="GO:0003735">
    <property type="term" value="F:structural constituent of ribosome"/>
    <property type="evidence" value="ECO:0007669"/>
    <property type="project" value="InterPro"/>
</dbReference>
<dbReference type="GO" id="GO:0006412">
    <property type="term" value="P:translation"/>
    <property type="evidence" value="ECO:0007669"/>
    <property type="project" value="UniProtKB-UniRule"/>
</dbReference>
<dbReference type="CDD" id="cd00427">
    <property type="entry name" value="Ribosomal_L29_HIP"/>
    <property type="match status" value="1"/>
</dbReference>
<dbReference type="FunFam" id="1.10.287.310:FF:000001">
    <property type="entry name" value="50S ribosomal protein L29"/>
    <property type="match status" value="1"/>
</dbReference>
<dbReference type="Gene3D" id="6.10.140.1970">
    <property type="match status" value="1"/>
</dbReference>
<dbReference type="HAMAP" id="MF_00374">
    <property type="entry name" value="Ribosomal_uL29"/>
    <property type="match status" value="1"/>
</dbReference>
<dbReference type="InterPro" id="IPR050063">
    <property type="entry name" value="Ribosomal_protein_uL29"/>
</dbReference>
<dbReference type="InterPro" id="IPR001854">
    <property type="entry name" value="Ribosomal_uL29"/>
</dbReference>
<dbReference type="InterPro" id="IPR018254">
    <property type="entry name" value="Ribosomal_uL29_CS"/>
</dbReference>
<dbReference type="InterPro" id="IPR036049">
    <property type="entry name" value="Ribosomal_uL29_sf"/>
</dbReference>
<dbReference type="NCBIfam" id="TIGR00012">
    <property type="entry name" value="L29"/>
    <property type="match status" value="1"/>
</dbReference>
<dbReference type="PANTHER" id="PTHR10916">
    <property type="entry name" value="60S RIBOSOMAL PROTEIN L35/50S RIBOSOMAL PROTEIN L29"/>
    <property type="match status" value="1"/>
</dbReference>
<dbReference type="PANTHER" id="PTHR10916:SF0">
    <property type="entry name" value="LARGE RIBOSOMAL SUBUNIT PROTEIN UL29C"/>
    <property type="match status" value="1"/>
</dbReference>
<dbReference type="Pfam" id="PF00831">
    <property type="entry name" value="Ribosomal_L29"/>
    <property type="match status" value="1"/>
</dbReference>
<dbReference type="SUPFAM" id="SSF46561">
    <property type="entry name" value="Ribosomal protein L29 (L29p)"/>
    <property type="match status" value="1"/>
</dbReference>
<dbReference type="PROSITE" id="PS00579">
    <property type="entry name" value="RIBOSOMAL_L29"/>
    <property type="match status" value="1"/>
</dbReference>
<evidence type="ECO:0000255" key="1">
    <source>
        <dbReference type="HAMAP-Rule" id="MF_00374"/>
    </source>
</evidence>
<evidence type="ECO:0000305" key="2"/>
<feature type="chain" id="PRO_1000121743" description="Large ribosomal subunit protein uL29">
    <location>
        <begin position="1"/>
        <end position="64"/>
    </location>
</feature>
<reference key="1">
    <citation type="journal article" date="2011" name="J. Bacteriol.">
        <title>Complete genome sequence of the plant growth-promoting endophyte Burkholderia phytofirmans strain PsJN.</title>
        <authorList>
            <person name="Weilharter A."/>
            <person name="Mitter B."/>
            <person name="Shin M.V."/>
            <person name="Chain P.S."/>
            <person name="Nowak J."/>
            <person name="Sessitsch A."/>
        </authorList>
    </citation>
    <scope>NUCLEOTIDE SEQUENCE [LARGE SCALE GENOMIC DNA]</scope>
    <source>
        <strain>DSM 17436 / LMG 22146 / PsJN</strain>
    </source>
</reference>
<comment type="similarity">
    <text evidence="1">Belongs to the universal ribosomal protein uL29 family.</text>
</comment>
<organism>
    <name type="scientific">Paraburkholderia phytofirmans (strain DSM 17436 / LMG 22146 / PsJN)</name>
    <name type="common">Burkholderia phytofirmans</name>
    <dbReference type="NCBI Taxonomy" id="398527"/>
    <lineage>
        <taxon>Bacteria</taxon>
        <taxon>Pseudomonadati</taxon>
        <taxon>Pseudomonadota</taxon>
        <taxon>Betaproteobacteria</taxon>
        <taxon>Burkholderiales</taxon>
        <taxon>Burkholderiaceae</taxon>
        <taxon>Paraburkholderia</taxon>
    </lineage>
</organism>
<protein>
    <recommendedName>
        <fullName evidence="1">Large ribosomal subunit protein uL29</fullName>
    </recommendedName>
    <alternativeName>
        <fullName evidence="2">50S ribosomal protein L29</fullName>
    </alternativeName>
</protein>